<gene>
    <name type="primary">y01E</name>
    <name type="synonym">dda.6</name>
    <name type="synonym">modA.2</name>
</gene>
<protein>
    <recommendedName>
        <fullName>Uncharacterized 7.0 kDa protein in modB-mrh intergenic region</fullName>
    </recommendedName>
</protein>
<feature type="chain" id="PRO_0000165086" description="Uncharacterized 7.0 kDa protein in modB-mrh intergenic region">
    <location>
        <begin position="1"/>
        <end position="60"/>
    </location>
</feature>
<organismHost>
    <name type="scientific">Escherichia coli</name>
    <dbReference type="NCBI Taxonomy" id="562"/>
</organismHost>
<accession>P39424</accession>
<reference key="1">
    <citation type="journal article" date="1990" name="Gene">
        <title>The bacteriophage T4 gene mrh whose product inhibits late T4 gene expression in an Escherichia coli rpoH (sigma 32) mutant.</title>
        <authorList>
            <person name="Frazier M.W."/>
            <person name="Mosig G."/>
        </authorList>
    </citation>
    <scope>NUCLEOTIDE SEQUENCE [GENOMIC DNA]</scope>
</reference>
<reference key="2">
    <citation type="journal article" date="2003" name="Microbiol. Mol. Biol. Rev.">
        <title>Bacteriophage T4 genome.</title>
        <authorList>
            <person name="Miller E.S."/>
            <person name="Kutter E."/>
            <person name="Mosig G."/>
            <person name="Arisaka F."/>
            <person name="Kunisawa T."/>
            <person name="Ruger W."/>
        </authorList>
    </citation>
    <scope>NUCLEOTIDE SEQUENCE [LARGE SCALE GENOMIC DNA]</scope>
</reference>
<keyword id="KW-1185">Reference proteome</keyword>
<proteinExistence type="predicted"/>
<organism>
    <name type="scientific">Enterobacteria phage T4</name>
    <name type="common">Bacteriophage T4</name>
    <dbReference type="NCBI Taxonomy" id="10665"/>
    <lineage>
        <taxon>Viruses</taxon>
        <taxon>Duplodnaviria</taxon>
        <taxon>Heunggongvirae</taxon>
        <taxon>Uroviricota</taxon>
        <taxon>Caudoviricetes</taxon>
        <taxon>Straboviridae</taxon>
        <taxon>Tevenvirinae</taxon>
        <taxon>Tequatrovirus</taxon>
    </lineage>
</organism>
<dbReference type="EMBL" id="M30001">
    <property type="protein sequence ID" value="AAB07800.1"/>
    <property type="molecule type" value="Genomic_DNA"/>
</dbReference>
<dbReference type="EMBL" id="AF158101">
    <property type="protein sequence ID" value="AAD42603.1"/>
    <property type="molecule type" value="Genomic_DNA"/>
</dbReference>
<dbReference type="PIR" id="T10141">
    <property type="entry name" value="T10141"/>
</dbReference>
<dbReference type="RefSeq" id="NP_049637.1">
    <property type="nucleotide sequence ID" value="NC_000866.4"/>
</dbReference>
<dbReference type="SMR" id="P39424"/>
<dbReference type="GeneID" id="1258753"/>
<dbReference type="KEGG" id="vg:1258753"/>
<dbReference type="OrthoDB" id="26953at10239"/>
<dbReference type="Proteomes" id="UP000009087">
    <property type="component" value="Segment"/>
</dbReference>
<name>Y01E_BPT4</name>
<sequence>MDLFEMLEDNHSTNNQNDSSDYKKEYRIVLQNYGIEAPDALLEELASYHLDPPPWAPWAK</sequence>